<evidence type="ECO:0000255" key="1">
    <source>
        <dbReference type="HAMAP-Rule" id="MF_00046"/>
    </source>
</evidence>
<proteinExistence type="inferred from homology"/>
<keyword id="KW-0067">ATP-binding</keyword>
<keyword id="KW-0131">Cell cycle</keyword>
<keyword id="KW-0132">Cell division</keyword>
<keyword id="KW-0133">Cell shape</keyword>
<keyword id="KW-0961">Cell wall biogenesis/degradation</keyword>
<keyword id="KW-0963">Cytoplasm</keyword>
<keyword id="KW-0436">Ligase</keyword>
<keyword id="KW-0547">Nucleotide-binding</keyword>
<keyword id="KW-0573">Peptidoglycan synthesis</keyword>
<comment type="function">
    <text evidence="1">Cell wall formation.</text>
</comment>
<comment type="catalytic activity">
    <reaction evidence="1">
        <text>UDP-N-acetyl-alpha-D-muramate + L-alanine + ATP = UDP-N-acetyl-alpha-D-muramoyl-L-alanine + ADP + phosphate + H(+)</text>
        <dbReference type="Rhea" id="RHEA:23372"/>
        <dbReference type="ChEBI" id="CHEBI:15378"/>
        <dbReference type="ChEBI" id="CHEBI:30616"/>
        <dbReference type="ChEBI" id="CHEBI:43474"/>
        <dbReference type="ChEBI" id="CHEBI:57972"/>
        <dbReference type="ChEBI" id="CHEBI:70757"/>
        <dbReference type="ChEBI" id="CHEBI:83898"/>
        <dbReference type="ChEBI" id="CHEBI:456216"/>
        <dbReference type="EC" id="6.3.2.8"/>
    </reaction>
</comment>
<comment type="pathway">
    <text evidence="1">Cell wall biogenesis; peptidoglycan biosynthesis.</text>
</comment>
<comment type="subcellular location">
    <subcellularLocation>
        <location evidence="1">Cytoplasm</location>
    </subcellularLocation>
</comment>
<comment type="similarity">
    <text evidence="1">Belongs to the MurCDEF family.</text>
</comment>
<dbReference type="EC" id="6.3.2.8" evidence="1"/>
<dbReference type="EMBL" id="CP000681">
    <property type="protein sequence ID" value="ABP74220.1"/>
    <property type="molecule type" value="Genomic_DNA"/>
</dbReference>
<dbReference type="SMR" id="A4Y2N7"/>
<dbReference type="STRING" id="319224.Sputcn32_0488"/>
<dbReference type="KEGG" id="spc:Sputcn32_0488"/>
<dbReference type="eggNOG" id="COG0773">
    <property type="taxonomic scope" value="Bacteria"/>
</dbReference>
<dbReference type="HOGENOM" id="CLU_028104_2_2_6"/>
<dbReference type="UniPathway" id="UPA00219"/>
<dbReference type="GO" id="GO:0005737">
    <property type="term" value="C:cytoplasm"/>
    <property type="evidence" value="ECO:0007669"/>
    <property type="project" value="UniProtKB-SubCell"/>
</dbReference>
<dbReference type="GO" id="GO:0005524">
    <property type="term" value="F:ATP binding"/>
    <property type="evidence" value="ECO:0007669"/>
    <property type="project" value="UniProtKB-UniRule"/>
</dbReference>
<dbReference type="GO" id="GO:0008763">
    <property type="term" value="F:UDP-N-acetylmuramate-L-alanine ligase activity"/>
    <property type="evidence" value="ECO:0007669"/>
    <property type="project" value="UniProtKB-UniRule"/>
</dbReference>
<dbReference type="GO" id="GO:0051301">
    <property type="term" value="P:cell division"/>
    <property type="evidence" value="ECO:0007669"/>
    <property type="project" value="UniProtKB-KW"/>
</dbReference>
<dbReference type="GO" id="GO:0071555">
    <property type="term" value="P:cell wall organization"/>
    <property type="evidence" value="ECO:0007669"/>
    <property type="project" value="UniProtKB-KW"/>
</dbReference>
<dbReference type="GO" id="GO:0009252">
    <property type="term" value="P:peptidoglycan biosynthetic process"/>
    <property type="evidence" value="ECO:0007669"/>
    <property type="project" value="UniProtKB-UniRule"/>
</dbReference>
<dbReference type="GO" id="GO:0008360">
    <property type="term" value="P:regulation of cell shape"/>
    <property type="evidence" value="ECO:0007669"/>
    <property type="project" value="UniProtKB-KW"/>
</dbReference>
<dbReference type="FunFam" id="3.40.1190.10:FF:000001">
    <property type="entry name" value="UDP-N-acetylmuramate--L-alanine ligase"/>
    <property type="match status" value="1"/>
</dbReference>
<dbReference type="FunFam" id="3.40.50.720:FF:000046">
    <property type="entry name" value="UDP-N-acetylmuramate--L-alanine ligase"/>
    <property type="match status" value="1"/>
</dbReference>
<dbReference type="Gene3D" id="3.90.190.20">
    <property type="entry name" value="Mur ligase, C-terminal domain"/>
    <property type="match status" value="1"/>
</dbReference>
<dbReference type="Gene3D" id="3.40.1190.10">
    <property type="entry name" value="Mur-like, catalytic domain"/>
    <property type="match status" value="1"/>
</dbReference>
<dbReference type="Gene3D" id="3.40.50.720">
    <property type="entry name" value="NAD(P)-binding Rossmann-like Domain"/>
    <property type="match status" value="1"/>
</dbReference>
<dbReference type="HAMAP" id="MF_00046">
    <property type="entry name" value="MurC"/>
    <property type="match status" value="1"/>
</dbReference>
<dbReference type="InterPro" id="IPR036565">
    <property type="entry name" value="Mur-like_cat_sf"/>
</dbReference>
<dbReference type="InterPro" id="IPR004101">
    <property type="entry name" value="Mur_ligase_C"/>
</dbReference>
<dbReference type="InterPro" id="IPR036615">
    <property type="entry name" value="Mur_ligase_C_dom_sf"/>
</dbReference>
<dbReference type="InterPro" id="IPR013221">
    <property type="entry name" value="Mur_ligase_cen"/>
</dbReference>
<dbReference type="InterPro" id="IPR000713">
    <property type="entry name" value="Mur_ligase_N"/>
</dbReference>
<dbReference type="InterPro" id="IPR050061">
    <property type="entry name" value="MurCDEF_pg_biosynth"/>
</dbReference>
<dbReference type="InterPro" id="IPR005758">
    <property type="entry name" value="UDP-N-AcMur_Ala_ligase_MurC"/>
</dbReference>
<dbReference type="NCBIfam" id="TIGR01082">
    <property type="entry name" value="murC"/>
    <property type="match status" value="1"/>
</dbReference>
<dbReference type="PANTHER" id="PTHR43445:SF3">
    <property type="entry name" value="UDP-N-ACETYLMURAMATE--L-ALANINE LIGASE"/>
    <property type="match status" value="1"/>
</dbReference>
<dbReference type="PANTHER" id="PTHR43445">
    <property type="entry name" value="UDP-N-ACETYLMURAMATE--L-ALANINE LIGASE-RELATED"/>
    <property type="match status" value="1"/>
</dbReference>
<dbReference type="Pfam" id="PF01225">
    <property type="entry name" value="Mur_ligase"/>
    <property type="match status" value="1"/>
</dbReference>
<dbReference type="Pfam" id="PF02875">
    <property type="entry name" value="Mur_ligase_C"/>
    <property type="match status" value="1"/>
</dbReference>
<dbReference type="Pfam" id="PF08245">
    <property type="entry name" value="Mur_ligase_M"/>
    <property type="match status" value="1"/>
</dbReference>
<dbReference type="SUPFAM" id="SSF51984">
    <property type="entry name" value="MurCD N-terminal domain"/>
    <property type="match status" value="1"/>
</dbReference>
<dbReference type="SUPFAM" id="SSF53623">
    <property type="entry name" value="MurD-like peptide ligases, catalytic domain"/>
    <property type="match status" value="1"/>
</dbReference>
<dbReference type="SUPFAM" id="SSF53244">
    <property type="entry name" value="MurD-like peptide ligases, peptide-binding domain"/>
    <property type="match status" value="1"/>
</dbReference>
<sequence>MTKTERYIQLRSMIPEMRRIKRIHFVGIGGAGMGGIAEVLVNEGYQVSGSDIAQNTVTDRLCLLGAKIQIGHAADNVQQVDVVVVSTAINAENPEIIAAKELRIPIVRRAEMLAELMRYRHGVAIAGTHGKTTTTSLIASVYGQAGRDPTFVIGGLLNSAGTNARLGTSRYLIAEADESDASFLHLQPMVSVVTNIEADHMDTYGGDFEKLKSTFVDFLHNLPFYGVAVVCIDDPVVREIMPRIGRHLVTYGFSDDADVQALNFSQQGHQCRFTVRRKGKEDLDLLLNLPGQHNVLNALAAIAVATEDEIDDSALIQALAEFQGIGRRFQHLGKFATPKGEVMLVDDYGHHPSEVAATIKAARAGWPEKRLVMAYQPHRYTRTRDLYEDFIEVLSQVDCLLLLDVYSAGEAPITGADGRALCRSIRLRGQLDPIFIASPDQLAEVLPDVLQEGDLLLTQGAGNIGALSRQLAVTELGFAKVEIAQVPA</sequence>
<reference key="1">
    <citation type="submission" date="2007-04" db="EMBL/GenBank/DDBJ databases">
        <title>Complete sequence of Shewanella putrefaciens CN-32.</title>
        <authorList>
            <consortium name="US DOE Joint Genome Institute"/>
            <person name="Copeland A."/>
            <person name="Lucas S."/>
            <person name="Lapidus A."/>
            <person name="Barry K."/>
            <person name="Detter J.C."/>
            <person name="Glavina del Rio T."/>
            <person name="Hammon N."/>
            <person name="Israni S."/>
            <person name="Dalin E."/>
            <person name="Tice H."/>
            <person name="Pitluck S."/>
            <person name="Chain P."/>
            <person name="Malfatti S."/>
            <person name="Shin M."/>
            <person name="Vergez L."/>
            <person name="Schmutz J."/>
            <person name="Larimer F."/>
            <person name="Land M."/>
            <person name="Hauser L."/>
            <person name="Kyrpides N."/>
            <person name="Mikhailova N."/>
            <person name="Romine M.F."/>
            <person name="Fredrickson J."/>
            <person name="Tiedje J."/>
            <person name="Richardson P."/>
        </authorList>
    </citation>
    <scope>NUCLEOTIDE SEQUENCE [LARGE SCALE GENOMIC DNA]</scope>
    <source>
        <strain>CN-32 / ATCC BAA-453</strain>
    </source>
</reference>
<name>MURC_SHEPC</name>
<feature type="chain" id="PRO_1000004408" description="UDP-N-acetylmuramate--L-alanine ligase">
    <location>
        <begin position="1"/>
        <end position="488"/>
    </location>
</feature>
<feature type="binding site" evidence="1">
    <location>
        <begin position="127"/>
        <end position="133"/>
    </location>
    <ligand>
        <name>ATP</name>
        <dbReference type="ChEBI" id="CHEBI:30616"/>
    </ligand>
</feature>
<organism>
    <name type="scientific">Shewanella putrefaciens (strain CN-32 / ATCC BAA-453)</name>
    <dbReference type="NCBI Taxonomy" id="319224"/>
    <lineage>
        <taxon>Bacteria</taxon>
        <taxon>Pseudomonadati</taxon>
        <taxon>Pseudomonadota</taxon>
        <taxon>Gammaproteobacteria</taxon>
        <taxon>Alteromonadales</taxon>
        <taxon>Shewanellaceae</taxon>
        <taxon>Shewanella</taxon>
    </lineage>
</organism>
<gene>
    <name evidence="1" type="primary">murC</name>
    <name type="ordered locus">Sputcn32_0488</name>
</gene>
<protein>
    <recommendedName>
        <fullName evidence="1">UDP-N-acetylmuramate--L-alanine ligase</fullName>
        <ecNumber evidence="1">6.3.2.8</ecNumber>
    </recommendedName>
    <alternativeName>
        <fullName evidence="1">UDP-N-acetylmuramoyl-L-alanine synthetase</fullName>
    </alternativeName>
</protein>
<accession>A4Y2N7</accession>